<sequence length="348" mass="38628">MSKQTIVLLYGGRSAEREVSVLSAESVMRAINYDKFHVKTYFISQAGDFYKTQEFTVQPSESEKLMTNASLDASLKIKASDIYEDKAVVFPLLHGPMGEDGSIQGFLEILKMPYVGTNILSSSVAMDKITTKRVLESAGIPQVNYTVYIEGNDLEDCITETLETLSFPIFVKPANMGSSVGISKAESIEGLREAIALALKYDSRILIEQGVVAREIEVGLLGNTKVASTLPGEVIKDVAFYDYQAKYIDNKISMAIPATIDEGITSQMRYFAEQAFKAIGACGLSRCDFFLAEDGNLYLNELNTMPGFTQWSMYPLLWDNMGLSYSDLIEELVSLAEEMFQKRESHLI</sequence>
<dbReference type="EC" id="6.3.2.4" evidence="2"/>
<dbReference type="EMBL" id="AM946015">
    <property type="protein sequence ID" value="CAR42743.1"/>
    <property type="molecule type" value="Genomic_DNA"/>
</dbReference>
<dbReference type="RefSeq" id="WP_012658732.1">
    <property type="nucleotide sequence ID" value="NC_012004.1"/>
</dbReference>
<dbReference type="SMR" id="B9DUS0"/>
<dbReference type="STRING" id="218495.SUB1257"/>
<dbReference type="KEGG" id="sub:SUB1257"/>
<dbReference type="eggNOG" id="COG1181">
    <property type="taxonomic scope" value="Bacteria"/>
</dbReference>
<dbReference type="HOGENOM" id="CLU_039268_0_0_9"/>
<dbReference type="OrthoDB" id="9813261at2"/>
<dbReference type="UniPathway" id="UPA00219"/>
<dbReference type="Proteomes" id="UP000000449">
    <property type="component" value="Chromosome"/>
</dbReference>
<dbReference type="GO" id="GO:0005829">
    <property type="term" value="C:cytosol"/>
    <property type="evidence" value="ECO:0007669"/>
    <property type="project" value="TreeGrafter"/>
</dbReference>
<dbReference type="GO" id="GO:0005524">
    <property type="term" value="F:ATP binding"/>
    <property type="evidence" value="ECO:0007669"/>
    <property type="project" value="UniProtKB-KW"/>
</dbReference>
<dbReference type="GO" id="GO:0008716">
    <property type="term" value="F:D-alanine-D-alanine ligase activity"/>
    <property type="evidence" value="ECO:0007669"/>
    <property type="project" value="UniProtKB-UniRule"/>
</dbReference>
<dbReference type="GO" id="GO:0046872">
    <property type="term" value="F:metal ion binding"/>
    <property type="evidence" value="ECO:0007669"/>
    <property type="project" value="UniProtKB-KW"/>
</dbReference>
<dbReference type="GO" id="GO:0071555">
    <property type="term" value="P:cell wall organization"/>
    <property type="evidence" value="ECO:0007669"/>
    <property type="project" value="UniProtKB-KW"/>
</dbReference>
<dbReference type="GO" id="GO:0009252">
    <property type="term" value="P:peptidoglycan biosynthetic process"/>
    <property type="evidence" value="ECO:0007669"/>
    <property type="project" value="UniProtKB-UniRule"/>
</dbReference>
<dbReference type="GO" id="GO:0008360">
    <property type="term" value="P:regulation of cell shape"/>
    <property type="evidence" value="ECO:0007669"/>
    <property type="project" value="UniProtKB-KW"/>
</dbReference>
<dbReference type="FunFam" id="3.30.1490.20:FF:000007">
    <property type="entry name" value="D-alanine--D-alanine ligase"/>
    <property type="match status" value="1"/>
</dbReference>
<dbReference type="FunFam" id="3.30.470.20:FF:000008">
    <property type="entry name" value="D-alanine--D-alanine ligase"/>
    <property type="match status" value="1"/>
</dbReference>
<dbReference type="Gene3D" id="3.40.50.20">
    <property type="match status" value="1"/>
</dbReference>
<dbReference type="Gene3D" id="3.30.1490.20">
    <property type="entry name" value="ATP-grasp fold, A domain"/>
    <property type="match status" value="1"/>
</dbReference>
<dbReference type="Gene3D" id="3.30.470.20">
    <property type="entry name" value="ATP-grasp fold, B domain"/>
    <property type="match status" value="1"/>
</dbReference>
<dbReference type="HAMAP" id="MF_00047">
    <property type="entry name" value="Dala_Dala_lig"/>
    <property type="match status" value="1"/>
</dbReference>
<dbReference type="InterPro" id="IPR011761">
    <property type="entry name" value="ATP-grasp"/>
</dbReference>
<dbReference type="InterPro" id="IPR013815">
    <property type="entry name" value="ATP_grasp_subdomain_1"/>
</dbReference>
<dbReference type="InterPro" id="IPR000291">
    <property type="entry name" value="D-Ala_lig_Van_CS"/>
</dbReference>
<dbReference type="InterPro" id="IPR005905">
    <property type="entry name" value="D_ala_D_ala"/>
</dbReference>
<dbReference type="InterPro" id="IPR011095">
    <property type="entry name" value="Dala_Dala_lig_C"/>
</dbReference>
<dbReference type="InterPro" id="IPR011127">
    <property type="entry name" value="Dala_Dala_lig_N"/>
</dbReference>
<dbReference type="InterPro" id="IPR016185">
    <property type="entry name" value="PreATP-grasp_dom_sf"/>
</dbReference>
<dbReference type="NCBIfam" id="TIGR01205">
    <property type="entry name" value="D_ala_D_alaTIGR"/>
    <property type="match status" value="1"/>
</dbReference>
<dbReference type="NCBIfam" id="NF002528">
    <property type="entry name" value="PRK01966.1-4"/>
    <property type="match status" value="1"/>
</dbReference>
<dbReference type="NCBIfam" id="NF002529">
    <property type="entry name" value="PRK01966.1-5"/>
    <property type="match status" value="1"/>
</dbReference>
<dbReference type="PANTHER" id="PTHR23132">
    <property type="entry name" value="D-ALANINE--D-ALANINE LIGASE"/>
    <property type="match status" value="1"/>
</dbReference>
<dbReference type="PANTHER" id="PTHR23132:SF25">
    <property type="entry name" value="D-ALANINE--D-ALANINE LIGASE A"/>
    <property type="match status" value="1"/>
</dbReference>
<dbReference type="Pfam" id="PF07478">
    <property type="entry name" value="Dala_Dala_lig_C"/>
    <property type="match status" value="1"/>
</dbReference>
<dbReference type="Pfam" id="PF01820">
    <property type="entry name" value="Dala_Dala_lig_N"/>
    <property type="match status" value="1"/>
</dbReference>
<dbReference type="PIRSF" id="PIRSF039102">
    <property type="entry name" value="Ddl/VanB"/>
    <property type="match status" value="1"/>
</dbReference>
<dbReference type="SUPFAM" id="SSF56059">
    <property type="entry name" value="Glutathione synthetase ATP-binding domain-like"/>
    <property type="match status" value="1"/>
</dbReference>
<dbReference type="SUPFAM" id="SSF52440">
    <property type="entry name" value="PreATP-grasp domain"/>
    <property type="match status" value="1"/>
</dbReference>
<dbReference type="PROSITE" id="PS50975">
    <property type="entry name" value="ATP_GRASP"/>
    <property type="match status" value="1"/>
</dbReference>
<dbReference type="PROSITE" id="PS00843">
    <property type="entry name" value="DALA_DALA_LIGASE_1"/>
    <property type="match status" value="1"/>
</dbReference>
<dbReference type="PROSITE" id="PS00844">
    <property type="entry name" value="DALA_DALA_LIGASE_2"/>
    <property type="match status" value="1"/>
</dbReference>
<accession>B9DUS0</accession>
<feature type="chain" id="PRO_1000189751" description="D-alanine--D-alanine ligase">
    <location>
        <begin position="1"/>
        <end position="348"/>
    </location>
</feature>
<feature type="domain" description="ATP-grasp" evidence="2">
    <location>
        <begin position="132"/>
        <end position="334"/>
    </location>
</feature>
<feature type="binding site" evidence="2">
    <location>
        <begin position="162"/>
        <end position="217"/>
    </location>
    <ligand>
        <name>ATP</name>
        <dbReference type="ChEBI" id="CHEBI:30616"/>
    </ligand>
</feature>
<feature type="binding site" evidence="2">
    <location>
        <position position="288"/>
    </location>
    <ligand>
        <name>Mg(2+)</name>
        <dbReference type="ChEBI" id="CHEBI:18420"/>
        <label>1</label>
    </ligand>
</feature>
<feature type="binding site" evidence="2">
    <location>
        <position position="301"/>
    </location>
    <ligand>
        <name>Mg(2+)</name>
        <dbReference type="ChEBI" id="CHEBI:18420"/>
        <label>1</label>
    </ligand>
</feature>
<feature type="binding site" evidence="2">
    <location>
        <position position="301"/>
    </location>
    <ligand>
        <name>Mg(2+)</name>
        <dbReference type="ChEBI" id="CHEBI:18420"/>
        <label>2</label>
    </ligand>
</feature>
<feature type="binding site" evidence="2">
    <location>
        <position position="303"/>
    </location>
    <ligand>
        <name>Mg(2+)</name>
        <dbReference type="ChEBI" id="CHEBI:18420"/>
        <label>2</label>
    </ligand>
</feature>
<comment type="function">
    <text evidence="2">Cell wall formation.</text>
</comment>
<comment type="catalytic activity">
    <reaction evidence="2">
        <text>2 D-alanine + ATP = D-alanyl-D-alanine + ADP + phosphate + H(+)</text>
        <dbReference type="Rhea" id="RHEA:11224"/>
        <dbReference type="ChEBI" id="CHEBI:15378"/>
        <dbReference type="ChEBI" id="CHEBI:30616"/>
        <dbReference type="ChEBI" id="CHEBI:43474"/>
        <dbReference type="ChEBI" id="CHEBI:57416"/>
        <dbReference type="ChEBI" id="CHEBI:57822"/>
        <dbReference type="ChEBI" id="CHEBI:456216"/>
        <dbReference type="EC" id="6.3.2.4"/>
    </reaction>
</comment>
<comment type="cofactor">
    <cofactor evidence="1">
        <name>Mg(2+)</name>
        <dbReference type="ChEBI" id="CHEBI:18420"/>
    </cofactor>
    <cofactor evidence="1">
        <name>Mn(2+)</name>
        <dbReference type="ChEBI" id="CHEBI:29035"/>
    </cofactor>
    <text evidence="1">Binds 2 magnesium or manganese ions per subunit.</text>
</comment>
<comment type="pathway">
    <text evidence="2">Cell wall biogenesis; peptidoglycan biosynthesis.</text>
</comment>
<comment type="subcellular location">
    <subcellularLocation>
        <location evidence="2">Cytoplasm</location>
    </subcellularLocation>
</comment>
<comment type="similarity">
    <text evidence="2">Belongs to the D-alanine--D-alanine ligase family.</text>
</comment>
<reference key="1">
    <citation type="journal article" date="2009" name="BMC Genomics">
        <title>Evidence for niche adaptation in the genome of the bovine pathogen Streptococcus uberis.</title>
        <authorList>
            <person name="Ward P.N."/>
            <person name="Holden M.T.G."/>
            <person name="Leigh J.A."/>
            <person name="Lennard N."/>
            <person name="Bignell A."/>
            <person name="Barron A."/>
            <person name="Clark L."/>
            <person name="Quail M.A."/>
            <person name="Woodward J."/>
            <person name="Barrell B.G."/>
            <person name="Egan S.A."/>
            <person name="Field T.R."/>
            <person name="Maskell D."/>
            <person name="Kehoe M."/>
            <person name="Dowson C.G."/>
            <person name="Chanter N."/>
            <person name="Whatmore A.M."/>
            <person name="Bentley S.D."/>
            <person name="Parkhill J."/>
        </authorList>
    </citation>
    <scope>NUCLEOTIDE SEQUENCE [LARGE SCALE GENOMIC DNA]</scope>
    <source>
        <strain>ATCC BAA-854 / 0140J</strain>
    </source>
</reference>
<name>DDL_STRU0</name>
<keyword id="KW-0067">ATP-binding</keyword>
<keyword id="KW-0133">Cell shape</keyword>
<keyword id="KW-0961">Cell wall biogenesis/degradation</keyword>
<keyword id="KW-0963">Cytoplasm</keyword>
<keyword id="KW-0436">Ligase</keyword>
<keyword id="KW-0460">Magnesium</keyword>
<keyword id="KW-0464">Manganese</keyword>
<keyword id="KW-0479">Metal-binding</keyword>
<keyword id="KW-0547">Nucleotide-binding</keyword>
<keyword id="KW-0573">Peptidoglycan synthesis</keyword>
<keyword id="KW-1185">Reference proteome</keyword>
<gene>
    <name evidence="2" type="primary">ddl</name>
    <name type="ordered locus">SUB1257</name>
</gene>
<organism>
    <name type="scientific">Streptococcus uberis (strain ATCC BAA-854 / 0140J)</name>
    <dbReference type="NCBI Taxonomy" id="218495"/>
    <lineage>
        <taxon>Bacteria</taxon>
        <taxon>Bacillati</taxon>
        <taxon>Bacillota</taxon>
        <taxon>Bacilli</taxon>
        <taxon>Lactobacillales</taxon>
        <taxon>Streptococcaceae</taxon>
        <taxon>Streptococcus</taxon>
    </lineage>
</organism>
<protein>
    <recommendedName>
        <fullName evidence="2">D-alanine--D-alanine ligase</fullName>
        <ecNumber evidence="2">6.3.2.4</ecNumber>
    </recommendedName>
    <alternativeName>
        <fullName evidence="2">D-Ala-D-Ala ligase</fullName>
    </alternativeName>
    <alternativeName>
        <fullName evidence="2">D-alanylalanine synthetase</fullName>
    </alternativeName>
</protein>
<evidence type="ECO:0000250" key="1"/>
<evidence type="ECO:0000255" key="2">
    <source>
        <dbReference type="HAMAP-Rule" id="MF_00047"/>
    </source>
</evidence>
<proteinExistence type="inferred from homology"/>